<evidence type="ECO:0000255" key="1">
    <source>
        <dbReference type="HAMAP-Rule" id="MF_00038"/>
    </source>
</evidence>
<gene>
    <name evidence="1" type="primary">mraY</name>
    <name type="ordered locus">TW546</name>
</gene>
<name>MRAY_TROW8</name>
<feature type="chain" id="PRO_0000108920" description="Phospho-N-acetylmuramoyl-pentapeptide-transferase">
    <location>
        <begin position="1"/>
        <end position="369"/>
    </location>
</feature>
<feature type="transmembrane region" description="Helical" evidence="1">
    <location>
        <begin position="2"/>
        <end position="22"/>
    </location>
</feature>
<feature type="transmembrane region" description="Helical" evidence="1">
    <location>
        <begin position="54"/>
        <end position="74"/>
    </location>
</feature>
<feature type="transmembrane region" description="Helical" evidence="1">
    <location>
        <begin position="80"/>
        <end position="100"/>
    </location>
</feature>
<feature type="transmembrane region" description="Helical" evidence="1">
    <location>
        <begin position="113"/>
        <end position="133"/>
    </location>
</feature>
<feature type="transmembrane region" description="Helical" evidence="1">
    <location>
        <begin position="158"/>
        <end position="178"/>
    </location>
</feature>
<feature type="transmembrane region" description="Helical" evidence="1">
    <location>
        <begin position="195"/>
        <end position="215"/>
    </location>
</feature>
<feature type="transmembrane region" description="Helical" evidence="1">
    <location>
        <begin position="241"/>
        <end position="261"/>
    </location>
</feature>
<feature type="transmembrane region" description="Helical" evidence="1">
    <location>
        <begin position="268"/>
        <end position="288"/>
    </location>
</feature>
<feature type="transmembrane region" description="Helical" evidence="1">
    <location>
        <begin position="293"/>
        <end position="313"/>
    </location>
</feature>
<feature type="transmembrane region" description="Helical" evidence="1">
    <location>
        <begin position="347"/>
        <end position="367"/>
    </location>
</feature>
<organism>
    <name type="scientific">Tropheryma whipplei (strain TW08/27)</name>
    <name type="common">Whipple's bacillus</name>
    <dbReference type="NCBI Taxonomy" id="218496"/>
    <lineage>
        <taxon>Bacteria</taxon>
        <taxon>Bacillati</taxon>
        <taxon>Actinomycetota</taxon>
        <taxon>Actinomycetes</taxon>
        <taxon>Micrococcales</taxon>
        <taxon>Tropherymataceae</taxon>
        <taxon>Tropheryma</taxon>
    </lineage>
</organism>
<reference key="1">
    <citation type="journal article" date="2003" name="Lancet">
        <title>Sequencing and analysis of the genome of the Whipple's disease bacterium Tropheryma whipplei.</title>
        <authorList>
            <person name="Bentley S.D."/>
            <person name="Maiwald M."/>
            <person name="Murphy L.D."/>
            <person name="Pallen M.J."/>
            <person name="Yeats C.A."/>
            <person name="Dover L.G."/>
            <person name="Norbertczak H.T."/>
            <person name="Besra G.S."/>
            <person name="Quail M.A."/>
            <person name="Harris D.E."/>
            <person name="von Herbay A."/>
            <person name="Goble A."/>
            <person name="Rutter S."/>
            <person name="Squares R."/>
            <person name="Squares S."/>
            <person name="Barrell B.G."/>
            <person name="Parkhill J."/>
            <person name="Relman D.A."/>
        </authorList>
    </citation>
    <scope>NUCLEOTIDE SEQUENCE [LARGE SCALE GENOMIC DNA]</scope>
    <source>
        <strain>TW08/27</strain>
    </source>
</reference>
<comment type="function">
    <text evidence="1">Catalyzes the initial step of the lipid cycle reactions in the biosynthesis of the cell wall peptidoglycan: transfers peptidoglycan precursor phospho-MurNAc-pentapeptide from UDP-MurNAc-pentapeptide onto the lipid carrier undecaprenyl phosphate, yielding undecaprenyl-pyrophosphoryl-MurNAc-pentapeptide, known as lipid I.</text>
</comment>
<comment type="catalytic activity">
    <reaction evidence="1">
        <text>UDP-N-acetyl-alpha-D-muramoyl-L-alanyl-gamma-D-glutamyl-meso-2,6-diaminopimeloyl-D-alanyl-D-alanine + di-trans,octa-cis-undecaprenyl phosphate = di-trans,octa-cis-undecaprenyl diphospho-N-acetyl-alpha-D-muramoyl-L-alanyl-D-glutamyl-meso-2,6-diaminopimeloyl-D-alanyl-D-alanine + UMP</text>
        <dbReference type="Rhea" id="RHEA:28386"/>
        <dbReference type="ChEBI" id="CHEBI:57865"/>
        <dbReference type="ChEBI" id="CHEBI:60392"/>
        <dbReference type="ChEBI" id="CHEBI:61386"/>
        <dbReference type="ChEBI" id="CHEBI:61387"/>
        <dbReference type="EC" id="2.7.8.13"/>
    </reaction>
</comment>
<comment type="cofactor">
    <cofactor evidence="1">
        <name>Mg(2+)</name>
        <dbReference type="ChEBI" id="CHEBI:18420"/>
    </cofactor>
</comment>
<comment type="pathway">
    <text evidence="1">Cell wall biogenesis; peptidoglycan biosynthesis.</text>
</comment>
<comment type="subcellular location">
    <subcellularLocation>
        <location evidence="1">Cell membrane</location>
        <topology evidence="1">Multi-pass membrane protein</topology>
    </subcellularLocation>
</comment>
<comment type="similarity">
    <text evidence="1">Belongs to the glycosyltransferase 4 family. MraY subfamily.</text>
</comment>
<keyword id="KW-0131">Cell cycle</keyword>
<keyword id="KW-0132">Cell division</keyword>
<keyword id="KW-1003">Cell membrane</keyword>
<keyword id="KW-0133">Cell shape</keyword>
<keyword id="KW-0961">Cell wall biogenesis/degradation</keyword>
<keyword id="KW-0460">Magnesium</keyword>
<keyword id="KW-0472">Membrane</keyword>
<keyword id="KW-0479">Metal-binding</keyword>
<keyword id="KW-0573">Peptidoglycan synthesis</keyword>
<keyword id="KW-0808">Transferase</keyword>
<keyword id="KW-0812">Transmembrane</keyword>
<keyword id="KW-1133">Transmembrane helix</keyword>
<protein>
    <recommendedName>
        <fullName evidence="1">Phospho-N-acetylmuramoyl-pentapeptide-transferase</fullName>
        <ecNumber evidence="1">2.7.8.13</ecNumber>
    </recommendedName>
    <alternativeName>
        <fullName evidence="1">UDP-MurNAc-pentapeptide phosphotransferase</fullName>
    </alternativeName>
</protein>
<dbReference type="EC" id="2.7.8.13" evidence="1"/>
<dbReference type="EMBL" id="BX251411">
    <property type="protein sequence ID" value="CAD67212.1"/>
    <property type="molecule type" value="Genomic_DNA"/>
</dbReference>
<dbReference type="RefSeq" id="WP_011096492.1">
    <property type="nucleotide sequence ID" value="NC_004551.1"/>
</dbReference>
<dbReference type="SMR" id="Q83HJ8"/>
<dbReference type="GeneID" id="67388325"/>
<dbReference type="KEGG" id="tws:TW546"/>
<dbReference type="HOGENOM" id="CLU_023982_0_0_11"/>
<dbReference type="UniPathway" id="UPA00219"/>
<dbReference type="GO" id="GO:0005886">
    <property type="term" value="C:plasma membrane"/>
    <property type="evidence" value="ECO:0007669"/>
    <property type="project" value="UniProtKB-SubCell"/>
</dbReference>
<dbReference type="GO" id="GO:0046872">
    <property type="term" value="F:metal ion binding"/>
    <property type="evidence" value="ECO:0007669"/>
    <property type="project" value="UniProtKB-KW"/>
</dbReference>
<dbReference type="GO" id="GO:0008963">
    <property type="term" value="F:phospho-N-acetylmuramoyl-pentapeptide-transferase activity"/>
    <property type="evidence" value="ECO:0007669"/>
    <property type="project" value="UniProtKB-UniRule"/>
</dbReference>
<dbReference type="GO" id="GO:0051992">
    <property type="term" value="F:UDP-N-acetylmuramoyl-L-alanyl-D-glutamyl-meso-2,6-diaminopimelyl-D-alanyl-D-alanine:undecaprenyl-phosphate transferase activity"/>
    <property type="evidence" value="ECO:0007669"/>
    <property type="project" value="RHEA"/>
</dbReference>
<dbReference type="GO" id="GO:0051301">
    <property type="term" value="P:cell division"/>
    <property type="evidence" value="ECO:0007669"/>
    <property type="project" value="UniProtKB-KW"/>
</dbReference>
<dbReference type="GO" id="GO:0071555">
    <property type="term" value="P:cell wall organization"/>
    <property type="evidence" value="ECO:0007669"/>
    <property type="project" value="UniProtKB-KW"/>
</dbReference>
<dbReference type="GO" id="GO:0009252">
    <property type="term" value="P:peptidoglycan biosynthetic process"/>
    <property type="evidence" value="ECO:0007669"/>
    <property type="project" value="UniProtKB-UniRule"/>
</dbReference>
<dbReference type="GO" id="GO:0008360">
    <property type="term" value="P:regulation of cell shape"/>
    <property type="evidence" value="ECO:0007669"/>
    <property type="project" value="UniProtKB-KW"/>
</dbReference>
<dbReference type="CDD" id="cd06852">
    <property type="entry name" value="GT_MraY"/>
    <property type="match status" value="1"/>
</dbReference>
<dbReference type="HAMAP" id="MF_00038">
    <property type="entry name" value="MraY"/>
    <property type="match status" value="1"/>
</dbReference>
<dbReference type="InterPro" id="IPR000715">
    <property type="entry name" value="Glycosyl_transferase_4"/>
</dbReference>
<dbReference type="InterPro" id="IPR003524">
    <property type="entry name" value="PNAcMuramoyl-5peptid_Trfase"/>
</dbReference>
<dbReference type="InterPro" id="IPR018480">
    <property type="entry name" value="PNAcMuramoyl-5peptid_Trfase_CS"/>
</dbReference>
<dbReference type="NCBIfam" id="TIGR00445">
    <property type="entry name" value="mraY"/>
    <property type="match status" value="1"/>
</dbReference>
<dbReference type="PANTHER" id="PTHR22926">
    <property type="entry name" value="PHOSPHO-N-ACETYLMURAMOYL-PENTAPEPTIDE-TRANSFERASE"/>
    <property type="match status" value="1"/>
</dbReference>
<dbReference type="PANTHER" id="PTHR22926:SF5">
    <property type="entry name" value="PHOSPHO-N-ACETYLMURAMOYL-PENTAPEPTIDE-TRANSFERASE HOMOLOG"/>
    <property type="match status" value="1"/>
</dbReference>
<dbReference type="Pfam" id="PF00953">
    <property type="entry name" value="Glycos_transf_4"/>
    <property type="match status" value="1"/>
</dbReference>
<dbReference type="Pfam" id="PF10555">
    <property type="entry name" value="MraY_sig1"/>
    <property type="match status" value="1"/>
</dbReference>
<dbReference type="PROSITE" id="PS01347">
    <property type="entry name" value="MRAY_1"/>
    <property type="match status" value="1"/>
</dbReference>
<dbReference type="PROSITE" id="PS01348">
    <property type="entry name" value="MRAY_2"/>
    <property type="match status" value="1"/>
</dbReference>
<accession>Q83HJ8</accession>
<sequence length="369" mass="40325">MIAILLAVAFGITFTLFTTPFFIRLFRKIGWGQFIRLDGPRQHAIKRGTPTMGGLVIVVASIISYFLANFFLGLSVEPSGLLVIFMFVGMSLVGFLDDILKVRKQHSGGLGPFYKVVLQSFIAVPFALLTFLVKDARGIPHSSMSISFARDTGINFSALFSLGIIGVFSAWVLYLLWINLIAVSSVNAVNITDGLDGLAAGAMIFTMLAYVVIGFWQSGQNCARKSLPLENISKCYSVNGPLDMSILAAAILGSLLGFLWWNTNPSKIMMGDTGALALGGAAAALSILTHTQLLFLVLGGLFVIEAGSVILQIAFYKKYRRRIFLMSPLHHHFELKGWAEITVVVRFWIIAGLFTALGIGLFYADWLYS</sequence>
<proteinExistence type="inferred from homology"/>